<comment type="function">
    <text evidence="1">Acts as a chaperone.</text>
</comment>
<comment type="induction">
    <text evidence="1">By stress conditions e.g. heat shock.</text>
</comment>
<comment type="similarity">
    <text evidence="1">Belongs to the heat shock protein 70 family.</text>
</comment>
<proteinExistence type="inferred from homology"/>
<gene>
    <name evidence="1" type="primary">dnaK</name>
    <name type="ordered locus">CMS2806</name>
</gene>
<feature type="chain" id="PRO_1000079218" description="Chaperone protein DnaK">
    <location>
        <begin position="1"/>
        <end position="623"/>
    </location>
</feature>
<feature type="region of interest" description="Disordered" evidence="2">
    <location>
        <begin position="581"/>
        <end position="623"/>
    </location>
</feature>
<feature type="compositionally biased region" description="Low complexity" evidence="2">
    <location>
        <begin position="581"/>
        <end position="596"/>
    </location>
</feature>
<feature type="compositionally biased region" description="Acidic residues" evidence="2">
    <location>
        <begin position="604"/>
        <end position="617"/>
    </location>
</feature>
<feature type="modified residue" description="Phosphothreonine; by autocatalysis" evidence="1">
    <location>
        <position position="175"/>
    </location>
</feature>
<keyword id="KW-0067">ATP-binding</keyword>
<keyword id="KW-0143">Chaperone</keyword>
<keyword id="KW-0547">Nucleotide-binding</keyword>
<keyword id="KW-0597">Phosphoprotein</keyword>
<keyword id="KW-0346">Stress response</keyword>
<dbReference type="EMBL" id="AM849034">
    <property type="protein sequence ID" value="CAQ02877.1"/>
    <property type="molecule type" value="Genomic_DNA"/>
</dbReference>
<dbReference type="RefSeq" id="WP_012300036.1">
    <property type="nucleotide sequence ID" value="NZ_MZMN01000003.1"/>
</dbReference>
<dbReference type="SMR" id="B0RBI1"/>
<dbReference type="STRING" id="31964.CMS2806"/>
<dbReference type="KEGG" id="cms:CMS2806"/>
<dbReference type="eggNOG" id="COG0443">
    <property type="taxonomic scope" value="Bacteria"/>
</dbReference>
<dbReference type="HOGENOM" id="CLU_005965_2_4_11"/>
<dbReference type="OrthoDB" id="9766019at2"/>
<dbReference type="Proteomes" id="UP000001318">
    <property type="component" value="Chromosome"/>
</dbReference>
<dbReference type="GO" id="GO:0005524">
    <property type="term" value="F:ATP binding"/>
    <property type="evidence" value="ECO:0007669"/>
    <property type="project" value="UniProtKB-UniRule"/>
</dbReference>
<dbReference type="GO" id="GO:0140662">
    <property type="term" value="F:ATP-dependent protein folding chaperone"/>
    <property type="evidence" value="ECO:0007669"/>
    <property type="project" value="InterPro"/>
</dbReference>
<dbReference type="GO" id="GO:0051082">
    <property type="term" value="F:unfolded protein binding"/>
    <property type="evidence" value="ECO:0007669"/>
    <property type="project" value="InterPro"/>
</dbReference>
<dbReference type="CDD" id="cd10234">
    <property type="entry name" value="ASKHA_NBD_HSP70_DnaK-like"/>
    <property type="match status" value="1"/>
</dbReference>
<dbReference type="FunFam" id="2.60.34.10:FF:000014">
    <property type="entry name" value="Chaperone protein DnaK HSP70"/>
    <property type="match status" value="1"/>
</dbReference>
<dbReference type="FunFam" id="1.20.1270.10:FF:000001">
    <property type="entry name" value="Molecular chaperone DnaK"/>
    <property type="match status" value="1"/>
</dbReference>
<dbReference type="FunFam" id="3.30.420.40:FF:000071">
    <property type="entry name" value="Molecular chaperone DnaK"/>
    <property type="match status" value="1"/>
</dbReference>
<dbReference type="FunFam" id="3.90.640.10:FF:000003">
    <property type="entry name" value="Molecular chaperone DnaK"/>
    <property type="match status" value="1"/>
</dbReference>
<dbReference type="Gene3D" id="1.20.1270.10">
    <property type="match status" value="1"/>
</dbReference>
<dbReference type="Gene3D" id="3.30.420.40">
    <property type="match status" value="2"/>
</dbReference>
<dbReference type="Gene3D" id="3.90.640.10">
    <property type="entry name" value="Actin, Chain A, domain 4"/>
    <property type="match status" value="1"/>
</dbReference>
<dbReference type="Gene3D" id="2.60.34.10">
    <property type="entry name" value="Substrate Binding Domain Of DNAk, Chain A, domain 1"/>
    <property type="match status" value="1"/>
</dbReference>
<dbReference type="HAMAP" id="MF_00332">
    <property type="entry name" value="DnaK"/>
    <property type="match status" value="1"/>
</dbReference>
<dbReference type="InterPro" id="IPR043129">
    <property type="entry name" value="ATPase_NBD"/>
</dbReference>
<dbReference type="InterPro" id="IPR012725">
    <property type="entry name" value="Chaperone_DnaK"/>
</dbReference>
<dbReference type="InterPro" id="IPR018181">
    <property type="entry name" value="Heat_shock_70_CS"/>
</dbReference>
<dbReference type="InterPro" id="IPR029048">
    <property type="entry name" value="HSP70_C_sf"/>
</dbReference>
<dbReference type="InterPro" id="IPR029047">
    <property type="entry name" value="HSP70_peptide-bd_sf"/>
</dbReference>
<dbReference type="InterPro" id="IPR013126">
    <property type="entry name" value="Hsp_70_fam"/>
</dbReference>
<dbReference type="NCBIfam" id="NF001413">
    <property type="entry name" value="PRK00290.1"/>
    <property type="match status" value="1"/>
</dbReference>
<dbReference type="NCBIfam" id="TIGR02350">
    <property type="entry name" value="prok_dnaK"/>
    <property type="match status" value="1"/>
</dbReference>
<dbReference type="PANTHER" id="PTHR19375">
    <property type="entry name" value="HEAT SHOCK PROTEIN 70KDA"/>
    <property type="match status" value="1"/>
</dbReference>
<dbReference type="Pfam" id="PF00012">
    <property type="entry name" value="HSP70"/>
    <property type="match status" value="2"/>
</dbReference>
<dbReference type="PRINTS" id="PR00301">
    <property type="entry name" value="HEATSHOCK70"/>
</dbReference>
<dbReference type="SUPFAM" id="SSF53067">
    <property type="entry name" value="Actin-like ATPase domain"/>
    <property type="match status" value="2"/>
</dbReference>
<dbReference type="SUPFAM" id="SSF100934">
    <property type="entry name" value="Heat shock protein 70kD (HSP70), C-terminal subdomain"/>
    <property type="match status" value="1"/>
</dbReference>
<dbReference type="SUPFAM" id="SSF100920">
    <property type="entry name" value="Heat shock protein 70kD (HSP70), peptide-binding domain"/>
    <property type="match status" value="1"/>
</dbReference>
<dbReference type="PROSITE" id="PS00297">
    <property type="entry name" value="HSP70_1"/>
    <property type="match status" value="1"/>
</dbReference>
<dbReference type="PROSITE" id="PS00329">
    <property type="entry name" value="HSP70_2"/>
    <property type="match status" value="1"/>
</dbReference>
<dbReference type="PROSITE" id="PS01036">
    <property type="entry name" value="HSP70_3"/>
    <property type="match status" value="1"/>
</dbReference>
<accession>B0RBI1</accession>
<reference key="1">
    <citation type="journal article" date="2008" name="J. Bacteriol.">
        <title>Genome of the actinomycete plant pathogen Clavibacter michiganensis subsp. sepedonicus suggests recent niche adaptation.</title>
        <authorList>
            <person name="Bentley S.D."/>
            <person name="Corton C."/>
            <person name="Brown S.E."/>
            <person name="Barron A."/>
            <person name="Clark L."/>
            <person name="Doggett J."/>
            <person name="Harris B."/>
            <person name="Ormond D."/>
            <person name="Quail M.A."/>
            <person name="May G."/>
            <person name="Francis D."/>
            <person name="Knudson D."/>
            <person name="Parkhill J."/>
            <person name="Ishimaru C.A."/>
        </authorList>
    </citation>
    <scope>NUCLEOTIDE SEQUENCE [LARGE SCALE GENOMIC DNA]</scope>
    <source>
        <strain>ATCC 33113 / DSM 20744 / JCM 9667 / LMG 2889 / ICMP 2535 / C-1</strain>
    </source>
</reference>
<sequence>MARAVGIDLGTTNSVVSVLEGGEPTVIANAEGARTTPSVVAFTKDGEVLVGETAKRQNVTNVDRTISSVKRHMGTDWTVGIDDKKYTSQELSARILGKLKRDAEQYLGDSVTDAVITVPAYFNDAERQATKEAGEIAGLNVLRIINEPTAAALAYGLDRGKEDELILVFDLGGGTFDVSLLEVGKDDDFSTIQVRSTAGDNRLGGDDWDQRIVDHLVKRFKESTGVDVSNDKIAKQRLKEAAEQAKKELSSSTSTSIQLPYLSLTENGPANLDETLTRAKFEELTNDLLERTRKPFEDVIREAGVSVGDVAHVVLVGGSTRMPAVVDLVKKLTGGKEPNKGVNPDEVVAVGAALQAGVLKGERKDVLLIDVTPLSLGIETKGGIMTKLIERNTAIPTKRSETFTTADDNQPSVAIQVFQGEREFTRDNKNLGTFELTGIAPAPRGIPQVEVTFDIDANGIVHVSAKDKGTGKEQSMTITGGSSLAKEDIERMVREAEEHAAEDKTRREQAEVRNNAEQLAYSIDKLIKENDDKLPEDVKSEVQGDVDGLKSALAGDDETAVKTAFDKLSASQTKLGEAIYAQGQQEQAAGEAPEGASEAKKDDEDIVDAEVVDEDDEDKKTDR</sequence>
<evidence type="ECO:0000255" key="1">
    <source>
        <dbReference type="HAMAP-Rule" id="MF_00332"/>
    </source>
</evidence>
<evidence type="ECO:0000256" key="2">
    <source>
        <dbReference type="SAM" id="MobiDB-lite"/>
    </source>
</evidence>
<name>DNAK_CLASE</name>
<protein>
    <recommendedName>
        <fullName evidence="1">Chaperone protein DnaK</fullName>
    </recommendedName>
    <alternativeName>
        <fullName evidence="1">HSP70</fullName>
    </alternativeName>
    <alternativeName>
        <fullName evidence="1">Heat shock 70 kDa protein</fullName>
    </alternativeName>
    <alternativeName>
        <fullName evidence="1">Heat shock protein 70</fullName>
    </alternativeName>
</protein>
<organism>
    <name type="scientific">Clavibacter sepedonicus</name>
    <name type="common">Clavibacter michiganensis subsp. sepedonicus</name>
    <dbReference type="NCBI Taxonomy" id="31964"/>
    <lineage>
        <taxon>Bacteria</taxon>
        <taxon>Bacillati</taxon>
        <taxon>Actinomycetota</taxon>
        <taxon>Actinomycetes</taxon>
        <taxon>Micrococcales</taxon>
        <taxon>Microbacteriaceae</taxon>
        <taxon>Clavibacter</taxon>
    </lineage>
</organism>